<reference key="1">
    <citation type="journal article" date="2007" name="PLoS Genet.">
        <title>Patterns and implications of gene gain and loss in the evolution of Prochlorococcus.</title>
        <authorList>
            <person name="Kettler G.C."/>
            <person name="Martiny A.C."/>
            <person name="Huang K."/>
            <person name="Zucker J."/>
            <person name="Coleman M.L."/>
            <person name="Rodrigue S."/>
            <person name="Chen F."/>
            <person name="Lapidus A."/>
            <person name="Ferriera S."/>
            <person name="Johnson J."/>
            <person name="Steglich C."/>
            <person name="Church G.M."/>
            <person name="Richardson P."/>
            <person name="Chisholm S.W."/>
        </authorList>
    </citation>
    <scope>NUCLEOTIDE SEQUENCE [LARGE SCALE GENOMIC DNA]</scope>
    <source>
        <strain>MIT 9303</strain>
    </source>
</reference>
<evidence type="ECO:0000255" key="1">
    <source>
        <dbReference type="HAMAP-Rule" id="MF_00051"/>
    </source>
</evidence>
<keyword id="KW-0028">Amino-acid biosynthesis</keyword>
<keyword id="KW-0963">Cytoplasm</keyword>
<keyword id="KW-0554">One-carbon metabolism</keyword>
<keyword id="KW-0663">Pyridoxal phosphate</keyword>
<keyword id="KW-0808">Transferase</keyword>
<feature type="chain" id="PRO_1000006295" description="Serine hydroxymethyltransferase">
    <location>
        <begin position="1"/>
        <end position="424"/>
    </location>
</feature>
<feature type="binding site" evidence="1">
    <location>
        <position position="126"/>
    </location>
    <ligand>
        <name>(6S)-5,6,7,8-tetrahydrofolate</name>
        <dbReference type="ChEBI" id="CHEBI:57453"/>
    </ligand>
</feature>
<feature type="binding site" evidence="1">
    <location>
        <begin position="130"/>
        <end position="132"/>
    </location>
    <ligand>
        <name>(6S)-5,6,7,8-tetrahydrofolate</name>
        <dbReference type="ChEBI" id="CHEBI:57453"/>
    </ligand>
</feature>
<feature type="binding site" evidence="1">
    <location>
        <begin position="359"/>
        <end position="361"/>
    </location>
    <ligand>
        <name>(6S)-5,6,7,8-tetrahydrofolate</name>
        <dbReference type="ChEBI" id="CHEBI:57453"/>
    </ligand>
</feature>
<feature type="site" description="Plays an important role in substrate specificity" evidence="1">
    <location>
        <position position="234"/>
    </location>
</feature>
<feature type="modified residue" description="N6-(pyridoxal phosphate)lysine" evidence="1">
    <location>
        <position position="235"/>
    </location>
</feature>
<protein>
    <recommendedName>
        <fullName evidence="1">Serine hydroxymethyltransferase</fullName>
        <shortName evidence="1">SHMT</shortName>
        <shortName evidence="1">Serine methylase</shortName>
        <ecNumber evidence="1">2.1.2.1</ecNumber>
    </recommendedName>
</protein>
<proteinExistence type="inferred from homology"/>
<dbReference type="EC" id="2.1.2.1" evidence="1"/>
<dbReference type="EMBL" id="CP000554">
    <property type="protein sequence ID" value="ABM79203.1"/>
    <property type="molecule type" value="Genomic_DNA"/>
</dbReference>
<dbReference type="RefSeq" id="WP_011827054.1">
    <property type="nucleotide sequence ID" value="NC_008820.1"/>
</dbReference>
<dbReference type="SMR" id="A2CCJ3"/>
<dbReference type="STRING" id="59922.P9303_24721"/>
<dbReference type="KEGG" id="pmf:P9303_24721"/>
<dbReference type="HOGENOM" id="CLU_022477_2_1_3"/>
<dbReference type="BioCyc" id="PMAR59922:G1G80-2163-MONOMER"/>
<dbReference type="UniPathway" id="UPA00193"/>
<dbReference type="UniPathway" id="UPA00288">
    <property type="reaction ID" value="UER01023"/>
</dbReference>
<dbReference type="Proteomes" id="UP000002274">
    <property type="component" value="Chromosome"/>
</dbReference>
<dbReference type="GO" id="GO:0005829">
    <property type="term" value="C:cytosol"/>
    <property type="evidence" value="ECO:0007669"/>
    <property type="project" value="TreeGrafter"/>
</dbReference>
<dbReference type="GO" id="GO:0004372">
    <property type="term" value="F:glycine hydroxymethyltransferase activity"/>
    <property type="evidence" value="ECO:0007669"/>
    <property type="project" value="UniProtKB-UniRule"/>
</dbReference>
<dbReference type="GO" id="GO:0030170">
    <property type="term" value="F:pyridoxal phosphate binding"/>
    <property type="evidence" value="ECO:0007669"/>
    <property type="project" value="UniProtKB-UniRule"/>
</dbReference>
<dbReference type="GO" id="GO:0019264">
    <property type="term" value="P:glycine biosynthetic process from serine"/>
    <property type="evidence" value="ECO:0007669"/>
    <property type="project" value="UniProtKB-UniRule"/>
</dbReference>
<dbReference type="GO" id="GO:0035999">
    <property type="term" value="P:tetrahydrofolate interconversion"/>
    <property type="evidence" value="ECO:0007669"/>
    <property type="project" value="UniProtKB-UniRule"/>
</dbReference>
<dbReference type="CDD" id="cd00378">
    <property type="entry name" value="SHMT"/>
    <property type="match status" value="1"/>
</dbReference>
<dbReference type="FunFam" id="3.40.640.10:FF:000001">
    <property type="entry name" value="Serine hydroxymethyltransferase"/>
    <property type="match status" value="1"/>
</dbReference>
<dbReference type="Gene3D" id="3.90.1150.10">
    <property type="entry name" value="Aspartate Aminotransferase, domain 1"/>
    <property type="match status" value="1"/>
</dbReference>
<dbReference type="Gene3D" id="3.40.640.10">
    <property type="entry name" value="Type I PLP-dependent aspartate aminotransferase-like (Major domain)"/>
    <property type="match status" value="1"/>
</dbReference>
<dbReference type="HAMAP" id="MF_00051">
    <property type="entry name" value="SHMT"/>
    <property type="match status" value="1"/>
</dbReference>
<dbReference type="InterPro" id="IPR015424">
    <property type="entry name" value="PyrdxlP-dep_Trfase"/>
</dbReference>
<dbReference type="InterPro" id="IPR015421">
    <property type="entry name" value="PyrdxlP-dep_Trfase_major"/>
</dbReference>
<dbReference type="InterPro" id="IPR015422">
    <property type="entry name" value="PyrdxlP-dep_Trfase_small"/>
</dbReference>
<dbReference type="InterPro" id="IPR001085">
    <property type="entry name" value="Ser_HO-MeTrfase"/>
</dbReference>
<dbReference type="InterPro" id="IPR049943">
    <property type="entry name" value="Ser_HO-MeTrfase-like"/>
</dbReference>
<dbReference type="InterPro" id="IPR019798">
    <property type="entry name" value="Ser_HO-MeTrfase_PLP_BS"/>
</dbReference>
<dbReference type="InterPro" id="IPR039429">
    <property type="entry name" value="SHMT-like_dom"/>
</dbReference>
<dbReference type="NCBIfam" id="NF000586">
    <property type="entry name" value="PRK00011.1"/>
    <property type="match status" value="1"/>
</dbReference>
<dbReference type="PANTHER" id="PTHR11680">
    <property type="entry name" value="SERINE HYDROXYMETHYLTRANSFERASE"/>
    <property type="match status" value="1"/>
</dbReference>
<dbReference type="PANTHER" id="PTHR11680:SF35">
    <property type="entry name" value="SERINE HYDROXYMETHYLTRANSFERASE 1"/>
    <property type="match status" value="1"/>
</dbReference>
<dbReference type="Pfam" id="PF00464">
    <property type="entry name" value="SHMT"/>
    <property type="match status" value="1"/>
</dbReference>
<dbReference type="PIRSF" id="PIRSF000412">
    <property type="entry name" value="SHMT"/>
    <property type="match status" value="1"/>
</dbReference>
<dbReference type="SUPFAM" id="SSF53383">
    <property type="entry name" value="PLP-dependent transferases"/>
    <property type="match status" value="1"/>
</dbReference>
<dbReference type="PROSITE" id="PS00096">
    <property type="entry name" value="SHMT"/>
    <property type="match status" value="1"/>
</dbReference>
<name>GLYA_PROM3</name>
<accession>A2CCJ3</accession>
<comment type="function">
    <text evidence="1">Catalyzes the reversible interconversion of serine and glycine with tetrahydrofolate (THF) serving as the one-carbon carrier. This reaction serves as the major source of one-carbon groups required for the biosynthesis of purines, thymidylate, methionine, and other important biomolecules. Also exhibits THF-independent aldolase activity toward beta-hydroxyamino acids, producing glycine and aldehydes, via a retro-aldol mechanism.</text>
</comment>
<comment type="catalytic activity">
    <reaction evidence="1">
        <text>(6R)-5,10-methylene-5,6,7,8-tetrahydrofolate + glycine + H2O = (6S)-5,6,7,8-tetrahydrofolate + L-serine</text>
        <dbReference type="Rhea" id="RHEA:15481"/>
        <dbReference type="ChEBI" id="CHEBI:15377"/>
        <dbReference type="ChEBI" id="CHEBI:15636"/>
        <dbReference type="ChEBI" id="CHEBI:33384"/>
        <dbReference type="ChEBI" id="CHEBI:57305"/>
        <dbReference type="ChEBI" id="CHEBI:57453"/>
        <dbReference type="EC" id="2.1.2.1"/>
    </reaction>
</comment>
<comment type="cofactor">
    <cofactor evidence="1">
        <name>pyridoxal 5'-phosphate</name>
        <dbReference type="ChEBI" id="CHEBI:597326"/>
    </cofactor>
</comment>
<comment type="pathway">
    <text evidence="1">One-carbon metabolism; tetrahydrofolate interconversion.</text>
</comment>
<comment type="pathway">
    <text evidence="1">Amino-acid biosynthesis; glycine biosynthesis; glycine from L-serine: step 1/1.</text>
</comment>
<comment type="subunit">
    <text evidence="1">Homodimer.</text>
</comment>
<comment type="subcellular location">
    <subcellularLocation>
        <location evidence="1">Cytoplasm</location>
    </subcellularLocation>
</comment>
<comment type="similarity">
    <text evidence="1">Belongs to the SHMT family.</text>
</comment>
<organism>
    <name type="scientific">Prochlorococcus marinus (strain MIT 9303)</name>
    <dbReference type="NCBI Taxonomy" id="59922"/>
    <lineage>
        <taxon>Bacteria</taxon>
        <taxon>Bacillati</taxon>
        <taxon>Cyanobacteriota</taxon>
        <taxon>Cyanophyceae</taxon>
        <taxon>Synechococcales</taxon>
        <taxon>Prochlorococcaceae</taxon>
        <taxon>Prochlorococcus</taxon>
    </lineage>
</organism>
<sequence length="424" mass="45739">MTDRCLASINAALTDSDPAIAGLIDQERQRQETHLELIASENFTSQAVMQAQGSVLTNKYAEGLPHKRYYGGCEHVDAIEELAIERARRLFGAAWANVQPHSGAQANFAVFLALLQPGDTIMGMDLSHGGHLTHGSPVNVSGKWFKVVHYGVEPDSQQLDMEAVRQLALKERPQLIICGYSAYPRTIDFAAFRSIADEVGAYLLADMAHIAGLVAAGVHPSPIAHCDVVTTTTHKTLRGPRGGLILCRDADFGRKFDKAVFPGSQGGPLEHVIAAKAVALGEALQPEFHAYSCQVVANAQVLAGRIQERGIAVVSGGTDNHLVLLDLRSIGMTGKVADLLVSDVNITANKNTVPFDPESPFVTSGLRLGTAALTTRGFDEEAFREVADVIADRLLKPQDESIKAQCLERVRQLCGRFPLYRGSL</sequence>
<gene>
    <name evidence="1" type="primary">glyA</name>
    <name type="ordered locus">P9303_24721</name>
</gene>